<gene>
    <name evidence="1" type="primary">apaG</name>
    <name type="ordered locus">YPO0491</name>
    <name type="ordered locus">y3684</name>
    <name type="ordered locus">YP_3688</name>
</gene>
<protein>
    <recommendedName>
        <fullName evidence="1">Protein ApaG</fullName>
    </recommendedName>
</protein>
<name>APAG_YERPE</name>
<accession>Q8ZIK6</accession>
<accession>Q0WJH4</accession>
<accession>Q74Q28</accession>
<accession>Q7CG86</accession>
<evidence type="ECO:0000255" key="1">
    <source>
        <dbReference type="HAMAP-Rule" id="MF_00791"/>
    </source>
</evidence>
<dbReference type="EMBL" id="AL590842">
    <property type="protein sequence ID" value="CAL19171.1"/>
    <property type="molecule type" value="Genomic_DNA"/>
</dbReference>
<dbReference type="EMBL" id="AE009952">
    <property type="protein sequence ID" value="AAM87232.1"/>
    <property type="molecule type" value="Genomic_DNA"/>
</dbReference>
<dbReference type="EMBL" id="AE017042">
    <property type="protein sequence ID" value="AAS63836.1"/>
    <property type="molecule type" value="Genomic_DNA"/>
</dbReference>
<dbReference type="PIR" id="AI0060">
    <property type="entry name" value="AI0060"/>
</dbReference>
<dbReference type="RefSeq" id="WP_002210491.1">
    <property type="nucleotide sequence ID" value="NZ_WUCM01000024.1"/>
</dbReference>
<dbReference type="RefSeq" id="YP_002345564.1">
    <property type="nucleotide sequence ID" value="NC_003143.1"/>
</dbReference>
<dbReference type="SMR" id="Q8ZIK6"/>
<dbReference type="STRING" id="214092.YPO0491"/>
<dbReference type="PaxDb" id="214092-YPO0491"/>
<dbReference type="DNASU" id="1148631"/>
<dbReference type="EnsemblBacteria" id="AAS63836">
    <property type="protein sequence ID" value="AAS63836"/>
    <property type="gene ID" value="YP_3688"/>
</dbReference>
<dbReference type="GeneID" id="57974119"/>
<dbReference type="KEGG" id="ype:YPO0491"/>
<dbReference type="KEGG" id="ypk:y3684"/>
<dbReference type="KEGG" id="ypm:YP_3688"/>
<dbReference type="PATRIC" id="fig|214092.21.peg.741"/>
<dbReference type="eggNOG" id="COG2967">
    <property type="taxonomic scope" value="Bacteria"/>
</dbReference>
<dbReference type="HOGENOM" id="CLU_128074_0_0_6"/>
<dbReference type="OMA" id="MRGEYFC"/>
<dbReference type="OrthoDB" id="9795226at2"/>
<dbReference type="Proteomes" id="UP000000815">
    <property type="component" value="Chromosome"/>
</dbReference>
<dbReference type="Proteomes" id="UP000001019">
    <property type="component" value="Chromosome"/>
</dbReference>
<dbReference type="Proteomes" id="UP000002490">
    <property type="component" value="Chromosome"/>
</dbReference>
<dbReference type="GO" id="GO:0070987">
    <property type="term" value="P:error-free translesion synthesis"/>
    <property type="evidence" value="ECO:0000318"/>
    <property type="project" value="GO_Central"/>
</dbReference>
<dbReference type="Gene3D" id="2.60.40.1470">
    <property type="entry name" value="ApaG domain"/>
    <property type="match status" value="1"/>
</dbReference>
<dbReference type="HAMAP" id="MF_00791">
    <property type="entry name" value="ApaG"/>
    <property type="match status" value="1"/>
</dbReference>
<dbReference type="InterPro" id="IPR007474">
    <property type="entry name" value="ApaG_domain"/>
</dbReference>
<dbReference type="InterPro" id="IPR036767">
    <property type="entry name" value="ApaG_sf"/>
</dbReference>
<dbReference type="InterPro" id="IPR023065">
    <property type="entry name" value="Uncharacterised_ApaG"/>
</dbReference>
<dbReference type="NCBIfam" id="NF003967">
    <property type="entry name" value="PRK05461.1"/>
    <property type="match status" value="1"/>
</dbReference>
<dbReference type="PANTHER" id="PTHR14289">
    <property type="entry name" value="F-BOX ONLY PROTEIN 3"/>
    <property type="match status" value="1"/>
</dbReference>
<dbReference type="PANTHER" id="PTHR14289:SF16">
    <property type="entry name" value="POLYMERASE DELTA-INTERACTING PROTEIN 2"/>
    <property type="match status" value="1"/>
</dbReference>
<dbReference type="Pfam" id="PF04379">
    <property type="entry name" value="DUF525"/>
    <property type="match status" value="1"/>
</dbReference>
<dbReference type="SUPFAM" id="SSF110069">
    <property type="entry name" value="ApaG-like"/>
    <property type="match status" value="1"/>
</dbReference>
<dbReference type="PROSITE" id="PS51087">
    <property type="entry name" value="APAG"/>
    <property type="match status" value="1"/>
</dbReference>
<proteinExistence type="inferred from homology"/>
<feature type="chain" id="PRO_0000197974" description="Protein ApaG">
    <location>
        <begin position="1"/>
        <end position="125"/>
    </location>
</feature>
<feature type="domain" description="ApaG" evidence="1">
    <location>
        <begin position="1"/>
        <end position="125"/>
    </location>
</feature>
<sequence length="125" mass="14126">MIEQPRICVQVHSIYVETQSIPEEERFVFAYTVTVRNLGRSNVQLLGRYWLITNSNGRQTEVQGEGVIGEQPLILPGNEFQYTSGAVLETPLGTMEGHYEMIDHLGQAFRTVIPVFRLAIPALIH</sequence>
<keyword id="KW-1185">Reference proteome</keyword>
<reference key="1">
    <citation type="journal article" date="2001" name="Nature">
        <title>Genome sequence of Yersinia pestis, the causative agent of plague.</title>
        <authorList>
            <person name="Parkhill J."/>
            <person name="Wren B.W."/>
            <person name="Thomson N.R."/>
            <person name="Titball R.W."/>
            <person name="Holden M.T.G."/>
            <person name="Prentice M.B."/>
            <person name="Sebaihia M."/>
            <person name="James K.D."/>
            <person name="Churcher C.M."/>
            <person name="Mungall K.L."/>
            <person name="Baker S."/>
            <person name="Basham D."/>
            <person name="Bentley S.D."/>
            <person name="Brooks K."/>
            <person name="Cerdeno-Tarraga A.-M."/>
            <person name="Chillingworth T."/>
            <person name="Cronin A."/>
            <person name="Davies R.M."/>
            <person name="Davis P."/>
            <person name="Dougan G."/>
            <person name="Feltwell T."/>
            <person name="Hamlin N."/>
            <person name="Holroyd S."/>
            <person name="Jagels K."/>
            <person name="Karlyshev A.V."/>
            <person name="Leather S."/>
            <person name="Moule S."/>
            <person name="Oyston P.C.F."/>
            <person name="Quail M.A."/>
            <person name="Rutherford K.M."/>
            <person name="Simmonds M."/>
            <person name="Skelton J."/>
            <person name="Stevens K."/>
            <person name="Whitehead S."/>
            <person name="Barrell B.G."/>
        </authorList>
    </citation>
    <scope>NUCLEOTIDE SEQUENCE [LARGE SCALE GENOMIC DNA]</scope>
    <source>
        <strain>CO-92 / Biovar Orientalis</strain>
    </source>
</reference>
<reference key="2">
    <citation type="journal article" date="2002" name="J. Bacteriol.">
        <title>Genome sequence of Yersinia pestis KIM.</title>
        <authorList>
            <person name="Deng W."/>
            <person name="Burland V."/>
            <person name="Plunkett G. III"/>
            <person name="Boutin A."/>
            <person name="Mayhew G.F."/>
            <person name="Liss P."/>
            <person name="Perna N.T."/>
            <person name="Rose D.J."/>
            <person name="Mau B."/>
            <person name="Zhou S."/>
            <person name="Schwartz D.C."/>
            <person name="Fetherston J.D."/>
            <person name="Lindler L.E."/>
            <person name="Brubaker R.R."/>
            <person name="Plano G.V."/>
            <person name="Straley S.C."/>
            <person name="McDonough K.A."/>
            <person name="Nilles M.L."/>
            <person name="Matson J.S."/>
            <person name="Blattner F.R."/>
            <person name="Perry R.D."/>
        </authorList>
    </citation>
    <scope>NUCLEOTIDE SEQUENCE [LARGE SCALE GENOMIC DNA]</scope>
    <source>
        <strain>KIM10+ / Biovar Mediaevalis</strain>
    </source>
</reference>
<reference key="3">
    <citation type="journal article" date="2004" name="DNA Res.">
        <title>Complete genome sequence of Yersinia pestis strain 91001, an isolate avirulent to humans.</title>
        <authorList>
            <person name="Song Y."/>
            <person name="Tong Z."/>
            <person name="Wang J."/>
            <person name="Wang L."/>
            <person name="Guo Z."/>
            <person name="Han Y."/>
            <person name="Zhang J."/>
            <person name="Pei D."/>
            <person name="Zhou D."/>
            <person name="Qin H."/>
            <person name="Pang X."/>
            <person name="Han Y."/>
            <person name="Zhai J."/>
            <person name="Li M."/>
            <person name="Cui B."/>
            <person name="Qi Z."/>
            <person name="Jin L."/>
            <person name="Dai R."/>
            <person name="Chen F."/>
            <person name="Li S."/>
            <person name="Ye C."/>
            <person name="Du Z."/>
            <person name="Lin W."/>
            <person name="Wang J."/>
            <person name="Yu J."/>
            <person name="Yang H."/>
            <person name="Wang J."/>
            <person name="Huang P."/>
            <person name="Yang R."/>
        </authorList>
    </citation>
    <scope>NUCLEOTIDE SEQUENCE [LARGE SCALE GENOMIC DNA]</scope>
    <source>
        <strain>91001 / Biovar Mediaevalis</strain>
    </source>
</reference>
<organism>
    <name type="scientific">Yersinia pestis</name>
    <dbReference type="NCBI Taxonomy" id="632"/>
    <lineage>
        <taxon>Bacteria</taxon>
        <taxon>Pseudomonadati</taxon>
        <taxon>Pseudomonadota</taxon>
        <taxon>Gammaproteobacteria</taxon>
        <taxon>Enterobacterales</taxon>
        <taxon>Yersiniaceae</taxon>
        <taxon>Yersinia</taxon>
    </lineage>
</organism>